<reference key="1">
    <citation type="journal article" date="2004" name="Nat. Genet.">
        <title>Complete sequencing and characterization of 21,243 full-length human cDNAs.</title>
        <authorList>
            <person name="Ota T."/>
            <person name="Suzuki Y."/>
            <person name="Nishikawa T."/>
            <person name="Otsuki T."/>
            <person name="Sugiyama T."/>
            <person name="Irie R."/>
            <person name="Wakamatsu A."/>
            <person name="Hayashi K."/>
            <person name="Sato H."/>
            <person name="Nagai K."/>
            <person name="Kimura K."/>
            <person name="Makita H."/>
            <person name="Sekine M."/>
            <person name="Obayashi M."/>
            <person name="Nishi T."/>
            <person name="Shibahara T."/>
            <person name="Tanaka T."/>
            <person name="Ishii S."/>
            <person name="Yamamoto J."/>
            <person name="Saito K."/>
            <person name="Kawai Y."/>
            <person name="Isono Y."/>
            <person name="Nakamura Y."/>
            <person name="Nagahari K."/>
            <person name="Murakami K."/>
            <person name="Yasuda T."/>
            <person name="Iwayanagi T."/>
            <person name="Wagatsuma M."/>
            <person name="Shiratori A."/>
            <person name="Sudo H."/>
            <person name="Hosoiri T."/>
            <person name="Kaku Y."/>
            <person name="Kodaira H."/>
            <person name="Kondo H."/>
            <person name="Sugawara M."/>
            <person name="Takahashi M."/>
            <person name="Kanda K."/>
            <person name="Yokoi T."/>
            <person name="Furuya T."/>
            <person name="Kikkawa E."/>
            <person name="Omura Y."/>
            <person name="Abe K."/>
            <person name="Kamihara K."/>
            <person name="Katsuta N."/>
            <person name="Sato K."/>
            <person name="Tanikawa M."/>
            <person name="Yamazaki M."/>
            <person name="Ninomiya K."/>
            <person name="Ishibashi T."/>
            <person name="Yamashita H."/>
            <person name="Murakawa K."/>
            <person name="Fujimori K."/>
            <person name="Tanai H."/>
            <person name="Kimata M."/>
            <person name="Watanabe M."/>
            <person name="Hiraoka S."/>
            <person name="Chiba Y."/>
            <person name="Ishida S."/>
            <person name="Ono Y."/>
            <person name="Takiguchi S."/>
            <person name="Watanabe S."/>
            <person name="Yosida M."/>
            <person name="Hotuta T."/>
            <person name="Kusano J."/>
            <person name="Kanehori K."/>
            <person name="Takahashi-Fujii A."/>
            <person name="Hara H."/>
            <person name="Tanase T.-O."/>
            <person name="Nomura Y."/>
            <person name="Togiya S."/>
            <person name="Komai F."/>
            <person name="Hara R."/>
            <person name="Takeuchi K."/>
            <person name="Arita M."/>
            <person name="Imose N."/>
            <person name="Musashino K."/>
            <person name="Yuuki H."/>
            <person name="Oshima A."/>
            <person name="Sasaki N."/>
            <person name="Aotsuka S."/>
            <person name="Yoshikawa Y."/>
            <person name="Matsunawa H."/>
            <person name="Ichihara T."/>
            <person name="Shiohata N."/>
            <person name="Sano S."/>
            <person name="Moriya S."/>
            <person name="Momiyama H."/>
            <person name="Satoh N."/>
            <person name="Takami S."/>
            <person name="Terashima Y."/>
            <person name="Suzuki O."/>
            <person name="Nakagawa S."/>
            <person name="Senoh A."/>
            <person name="Mizoguchi H."/>
            <person name="Goto Y."/>
            <person name="Shimizu F."/>
            <person name="Wakebe H."/>
            <person name="Hishigaki H."/>
            <person name="Watanabe T."/>
            <person name="Sugiyama A."/>
            <person name="Takemoto M."/>
            <person name="Kawakami B."/>
            <person name="Yamazaki M."/>
            <person name="Watanabe K."/>
            <person name="Kumagai A."/>
            <person name="Itakura S."/>
            <person name="Fukuzumi Y."/>
            <person name="Fujimori Y."/>
            <person name="Komiyama M."/>
            <person name="Tashiro H."/>
            <person name="Tanigami A."/>
            <person name="Fujiwara T."/>
            <person name="Ono T."/>
            <person name="Yamada K."/>
            <person name="Fujii Y."/>
            <person name="Ozaki K."/>
            <person name="Hirao M."/>
            <person name="Ohmori Y."/>
            <person name="Kawabata A."/>
            <person name="Hikiji T."/>
            <person name="Kobatake N."/>
            <person name="Inagaki H."/>
            <person name="Ikema Y."/>
            <person name="Okamoto S."/>
            <person name="Okitani R."/>
            <person name="Kawakami T."/>
            <person name="Noguchi S."/>
            <person name="Itoh T."/>
            <person name="Shigeta K."/>
            <person name="Senba T."/>
            <person name="Matsumura K."/>
            <person name="Nakajima Y."/>
            <person name="Mizuno T."/>
            <person name="Morinaga M."/>
            <person name="Sasaki M."/>
            <person name="Togashi T."/>
            <person name="Oyama M."/>
            <person name="Hata H."/>
            <person name="Watanabe M."/>
            <person name="Komatsu T."/>
            <person name="Mizushima-Sugano J."/>
            <person name="Satoh T."/>
            <person name="Shirai Y."/>
            <person name="Takahashi Y."/>
            <person name="Nakagawa K."/>
            <person name="Okumura K."/>
            <person name="Nagase T."/>
            <person name="Nomura N."/>
            <person name="Kikuchi H."/>
            <person name="Masuho Y."/>
            <person name="Yamashita R."/>
            <person name="Nakai K."/>
            <person name="Yada T."/>
            <person name="Nakamura Y."/>
            <person name="Ohara O."/>
            <person name="Isogai T."/>
            <person name="Sugano S."/>
        </authorList>
    </citation>
    <scope>NUCLEOTIDE SEQUENCE [LARGE SCALE MRNA] (ISOFORM 1)</scope>
</reference>
<reference key="2">
    <citation type="journal article" date="2001" name="Science">
        <title>The sequence of the human genome.</title>
        <authorList>
            <person name="Venter J.C."/>
            <person name="Adams M.D."/>
            <person name="Myers E.W."/>
            <person name="Li P.W."/>
            <person name="Mural R.J."/>
            <person name="Sutton G.G."/>
            <person name="Smith H.O."/>
            <person name="Yandell M."/>
            <person name="Evans C.A."/>
            <person name="Holt R.A."/>
            <person name="Gocayne J.D."/>
            <person name="Amanatides P."/>
            <person name="Ballew R.M."/>
            <person name="Huson D.H."/>
            <person name="Wortman J.R."/>
            <person name="Zhang Q."/>
            <person name="Kodira C.D."/>
            <person name="Zheng X.H."/>
            <person name="Chen L."/>
            <person name="Skupski M."/>
            <person name="Subramanian G."/>
            <person name="Thomas P.D."/>
            <person name="Zhang J."/>
            <person name="Gabor Miklos G.L."/>
            <person name="Nelson C."/>
            <person name="Broder S."/>
            <person name="Clark A.G."/>
            <person name="Nadeau J."/>
            <person name="McKusick V.A."/>
            <person name="Zinder N."/>
            <person name="Levine A.J."/>
            <person name="Roberts R.J."/>
            <person name="Simon M."/>
            <person name="Slayman C."/>
            <person name="Hunkapiller M."/>
            <person name="Bolanos R."/>
            <person name="Delcher A."/>
            <person name="Dew I."/>
            <person name="Fasulo D."/>
            <person name="Flanigan M."/>
            <person name="Florea L."/>
            <person name="Halpern A."/>
            <person name="Hannenhalli S."/>
            <person name="Kravitz S."/>
            <person name="Levy S."/>
            <person name="Mobarry C."/>
            <person name="Reinert K."/>
            <person name="Remington K."/>
            <person name="Abu-Threideh J."/>
            <person name="Beasley E."/>
            <person name="Biddick K."/>
            <person name="Bonazzi V."/>
            <person name="Brandon R."/>
            <person name="Cargill M."/>
            <person name="Chandramouliswaran I."/>
            <person name="Charlab R."/>
            <person name="Chaturvedi K."/>
            <person name="Deng Z."/>
            <person name="Di Francesco V."/>
            <person name="Dunn P."/>
            <person name="Eilbeck K."/>
            <person name="Evangelista C."/>
            <person name="Gabrielian A.E."/>
            <person name="Gan W."/>
            <person name="Ge W."/>
            <person name="Gong F."/>
            <person name="Gu Z."/>
            <person name="Guan P."/>
            <person name="Heiman T.J."/>
            <person name="Higgins M.E."/>
            <person name="Ji R.R."/>
            <person name="Ke Z."/>
            <person name="Ketchum K.A."/>
            <person name="Lai Z."/>
            <person name="Lei Y."/>
            <person name="Li Z."/>
            <person name="Li J."/>
            <person name="Liang Y."/>
            <person name="Lin X."/>
            <person name="Lu F."/>
            <person name="Merkulov G.V."/>
            <person name="Milshina N."/>
            <person name="Moore H.M."/>
            <person name="Naik A.K."/>
            <person name="Narayan V.A."/>
            <person name="Neelam B."/>
            <person name="Nusskern D."/>
            <person name="Rusch D.B."/>
            <person name="Salzberg S."/>
            <person name="Shao W."/>
            <person name="Shue B."/>
            <person name="Sun J."/>
            <person name="Wang Z."/>
            <person name="Wang A."/>
            <person name="Wang X."/>
            <person name="Wang J."/>
            <person name="Wei M."/>
            <person name="Wides R."/>
            <person name="Xiao C."/>
            <person name="Yan C."/>
            <person name="Yao A."/>
            <person name="Ye J."/>
            <person name="Zhan M."/>
            <person name="Zhang W."/>
            <person name="Zhang H."/>
            <person name="Zhao Q."/>
            <person name="Zheng L."/>
            <person name="Zhong F."/>
            <person name="Zhong W."/>
            <person name="Zhu S."/>
            <person name="Zhao S."/>
            <person name="Gilbert D."/>
            <person name="Baumhueter S."/>
            <person name="Spier G."/>
            <person name="Carter C."/>
            <person name="Cravchik A."/>
            <person name="Woodage T."/>
            <person name="Ali F."/>
            <person name="An H."/>
            <person name="Awe A."/>
            <person name="Baldwin D."/>
            <person name="Baden H."/>
            <person name="Barnstead M."/>
            <person name="Barrow I."/>
            <person name="Beeson K."/>
            <person name="Busam D."/>
            <person name="Carver A."/>
            <person name="Center A."/>
            <person name="Cheng M.L."/>
            <person name="Curry L."/>
            <person name="Danaher S."/>
            <person name="Davenport L."/>
            <person name="Desilets R."/>
            <person name="Dietz S."/>
            <person name="Dodson K."/>
            <person name="Doup L."/>
            <person name="Ferriera S."/>
            <person name="Garg N."/>
            <person name="Gluecksmann A."/>
            <person name="Hart B."/>
            <person name="Haynes J."/>
            <person name="Haynes C."/>
            <person name="Heiner C."/>
            <person name="Hladun S."/>
            <person name="Hostin D."/>
            <person name="Houck J."/>
            <person name="Howland T."/>
            <person name="Ibegwam C."/>
            <person name="Johnson J."/>
            <person name="Kalush F."/>
            <person name="Kline L."/>
            <person name="Koduru S."/>
            <person name="Love A."/>
            <person name="Mann F."/>
            <person name="May D."/>
            <person name="McCawley S."/>
            <person name="McIntosh T."/>
            <person name="McMullen I."/>
            <person name="Moy M."/>
            <person name="Moy L."/>
            <person name="Murphy B."/>
            <person name="Nelson K."/>
            <person name="Pfannkoch C."/>
            <person name="Pratts E."/>
            <person name="Puri V."/>
            <person name="Qureshi H."/>
            <person name="Reardon M."/>
            <person name="Rodriguez R."/>
            <person name="Rogers Y.H."/>
            <person name="Romblad D."/>
            <person name="Ruhfel B."/>
            <person name="Scott R."/>
            <person name="Sitter C."/>
            <person name="Smallwood M."/>
            <person name="Stewart E."/>
            <person name="Strong R."/>
            <person name="Suh E."/>
            <person name="Thomas R."/>
            <person name="Tint N.N."/>
            <person name="Tse S."/>
            <person name="Vech C."/>
            <person name="Wang G."/>
            <person name="Wetter J."/>
            <person name="Williams S."/>
            <person name="Williams M."/>
            <person name="Windsor S."/>
            <person name="Winn-Deen E."/>
            <person name="Wolfe K."/>
            <person name="Zaveri J."/>
            <person name="Zaveri K."/>
            <person name="Abril J.F."/>
            <person name="Guigo R."/>
            <person name="Campbell M.J."/>
            <person name="Sjolander K.V."/>
            <person name="Karlak B."/>
            <person name="Kejariwal A."/>
            <person name="Mi H."/>
            <person name="Lazareva B."/>
            <person name="Hatton T."/>
            <person name="Narechania A."/>
            <person name="Diemer K."/>
            <person name="Muruganujan A."/>
            <person name="Guo N."/>
            <person name="Sato S."/>
            <person name="Bafna V."/>
            <person name="Istrail S."/>
            <person name="Lippert R."/>
            <person name="Schwartz R."/>
            <person name="Walenz B."/>
            <person name="Yooseph S."/>
            <person name="Allen D."/>
            <person name="Basu A."/>
            <person name="Baxendale J."/>
            <person name="Blick L."/>
            <person name="Caminha M."/>
            <person name="Carnes-Stine J."/>
            <person name="Caulk P."/>
            <person name="Chiang Y.H."/>
            <person name="Coyne M."/>
            <person name="Dahlke C."/>
            <person name="Mays A."/>
            <person name="Dombroski M."/>
            <person name="Donnelly M."/>
            <person name="Ely D."/>
            <person name="Esparham S."/>
            <person name="Fosler C."/>
            <person name="Gire H."/>
            <person name="Glanowski S."/>
            <person name="Glasser K."/>
            <person name="Glodek A."/>
            <person name="Gorokhov M."/>
            <person name="Graham K."/>
            <person name="Gropman B."/>
            <person name="Harris M."/>
            <person name="Heil J."/>
            <person name="Henderson S."/>
            <person name="Hoover J."/>
            <person name="Jennings D."/>
            <person name="Jordan C."/>
            <person name="Jordan J."/>
            <person name="Kasha J."/>
            <person name="Kagan L."/>
            <person name="Kraft C."/>
            <person name="Levitsky A."/>
            <person name="Lewis M."/>
            <person name="Liu X."/>
            <person name="Lopez J."/>
            <person name="Ma D."/>
            <person name="Majoros W."/>
            <person name="McDaniel J."/>
            <person name="Murphy S."/>
            <person name="Newman M."/>
            <person name="Nguyen T."/>
            <person name="Nguyen N."/>
            <person name="Nodell M."/>
            <person name="Pan S."/>
            <person name="Peck J."/>
            <person name="Peterson M."/>
            <person name="Rowe W."/>
            <person name="Sanders R."/>
            <person name="Scott J."/>
            <person name="Simpson M."/>
            <person name="Smith T."/>
            <person name="Sprague A."/>
            <person name="Stockwell T."/>
            <person name="Turner R."/>
            <person name="Venter E."/>
            <person name="Wang M."/>
            <person name="Wen M."/>
            <person name="Wu D."/>
            <person name="Wu M."/>
            <person name="Xia A."/>
            <person name="Zandieh A."/>
            <person name="Zhu X."/>
        </authorList>
    </citation>
    <scope>NUCLEOTIDE SEQUENCE [LARGE SCALE GENOMIC DNA] (ISOFORMS 1 AND 2)</scope>
</reference>
<reference key="3">
    <citation type="journal article" date="2005" name="Nature">
        <title>Generation and annotation of the DNA sequences of human chromosomes 2 and 4.</title>
        <authorList>
            <person name="Hillier L.W."/>
            <person name="Graves T.A."/>
            <person name="Fulton R.S."/>
            <person name="Fulton L.A."/>
            <person name="Pepin K.H."/>
            <person name="Minx P."/>
            <person name="Wagner-McPherson C."/>
            <person name="Layman D."/>
            <person name="Wylie K."/>
            <person name="Sekhon M."/>
            <person name="Becker M.C."/>
            <person name="Fewell G.A."/>
            <person name="Delehaunty K.D."/>
            <person name="Miner T.L."/>
            <person name="Nash W.E."/>
            <person name="Kremitzki C."/>
            <person name="Oddy L."/>
            <person name="Du H."/>
            <person name="Sun H."/>
            <person name="Bradshaw-Cordum H."/>
            <person name="Ali J."/>
            <person name="Carter J."/>
            <person name="Cordes M."/>
            <person name="Harris A."/>
            <person name="Isak A."/>
            <person name="van Brunt A."/>
            <person name="Nguyen C."/>
            <person name="Du F."/>
            <person name="Courtney L."/>
            <person name="Kalicki J."/>
            <person name="Ozersky P."/>
            <person name="Abbott S."/>
            <person name="Armstrong J."/>
            <person name="Belter E.A."/>
            <person name="Caruso L."/>
            <person name="Cedroni M."/>
            <person name="Cotton M."/>
            <person name="Davidson T."/>
            <person name="Desai A."/>
            <person name="Elliott G."/>
            <person name="Erb T."/>
            <person name="Fronick C."/>
            <person name="Gaige T."/>
            <person name="Haakenson W."/>
            <person name="Haglund K."/>
            <person name="Holmes A."/>
            <person name="Harkins R."/>
            <person name="Kim K."/>
            <person name="Kruchowski S.S."/>
            <person name="Strong C.M."/>
            <person name="Grewal N."/>
            <person name="Goyea E."/>
            <person name="Hou S."/>
            <person name="Levy A."/>
            <person name="Martinka S."/>
            <person name="Mead K."/>
            <person name="McLellan M.D."/>
            <person name="Meyer R."/>
            <person name="Randall-Maher J."/>
            <person name="Tomlinson C."/>
            <person name="Dauphin-Kohlberg S."/>
            <person name="Kozlowicz-Reilly A."/>
            <person name="Shah N."/>
            <person name="Swearengen-Shahid S."/>
            <person name="Snider J."/>
            <person name="Strong J.T."/>
            <person name="Thompson J."/>
            <person name="Yoakum M."/>
            <person name="Leonard S."/>
            <person name="Pearman C."/>
            <person name="Trani L."/>
            <person name="Radionenko M."/>
            <person name="Waligorski J.E."/>
            <person name="Wang C."/>
            <person name="Rock S.M."/>
            <person name="Tin-Wollam A.-M."/>
            <person name="Maupin R."/>
            <person name="Latreille P."/>
            <person name="Wendl M.C."/>
            <person name="Yang S.-P."/>
            <person name="Pohl C."/>
            <person name="Wallis J.W."/>
            <person name="Spieth J."/>
            <person name="Bieri T.A."/>
            <person name="Berkowicz N."/>
            <person name="Nelson J.O."/>
            <person name="Osborne J."/>
            <person name="Ding L."/>
            <person name="Meyer R."/>
            <person name="Sabo A."/>
            <person name="Shotland Y."/>
            <person name="Sinha P."/>
            <person name="Wohldmann P.E."/>
            <person name="Cook L.L."/>
            <person name="Hickenbotham M.T."/>
            <person name="Eldred J."/>
            <person name="Williams D."/>
            <person name="Jones T.A."/>
            <person name="She X."/>
            <person name="Ciccarelli F.D."/>
            <person name="Izaurralde E."/>
            <person name="Taylor J."/>
            <person name="Schmutz J."/>
            <person name="Myers R.M."/>
            <person name="Cox D.R."/>
            <person name="Huang X."/>
            <person name="McPherson J.D."/>
            <person name="Mardis E.R."/>
            <person name="Clifton S.W."/>
            <person name="Warren W.C."/>
            <person name="Chinwalla A.T."/>
            <person name="Eddy S.R."/>
            <person name="Marra M.A."/>
            <person name="Ovcharenko I."/>
            <person name="Furey T.S."/>
            <person name="Miller W."/>
            <person name="Eichler E.E."/>
            <person name="Bork P."/>
            <person name="Suyama M."/>
            <person name="Torrents D."/>
            <person name="Waterston R.H."/>
            <person name="Wilson R.K."/>
        </authorList>
    </citation>
    <scope>NUCLEOTIDE SEQUENCE [LARGE SCALE GENOMIC DNA] (ISOFORMS 1 AND 2)</scope>
</reference>
<reference key="4">
    <citation type="journal article" date="2002" name="Proc. Natl. Acad. Sci. U.S.A.">
        <title>Generation and initial analysis of more than 15,000 full-length human and mouse cDNA sequences.</title>
        <authorList>
            <consortium name="Mammalian Gene Collection Program Team"/>
            <person name="Strausberg R.L."/>
            <person name="Feingold E.A."/>
            <person name="Grouse L.H."/>
            <person name="Derge J.G."/>
            <person name="Klausner R.D."/>
            <person name="Collins F.S."/>
            <person name="Wagner L."/>
            <person name="Shenmen C.M."/>
            <person name="Schuler G.D."/>
            <person name="Altschul S.F."/>
            <person name="Zeeberg B."/>
            <person name="Buetow K.H."/>
            <person name="Schaefer C.F."/>
            <person name="Bhat N.K."/>
            <person name="Hopkins R.F."/>
            <person name="Jordan H."/>
            <person name="Moore T."/>
            <person name="Max S.I."/>
            <person name="Wang J."/>
            <person name="Hsieh F."/>
            <person name="Diatchenko L."/>
            <person name="Marusina K."/>
            <person name="Farmer A.A."/>
            <person name="Rubin G.M."/>
            <person name="Hong L."/>
            <person name="Stapleton M."/>
            <person name="Soares M.B."/>
            <person name="Bonaldo M.F."/>
            <person name="Casavant T.L."/>
            <person name="Scheetz T.E."/>
            <person name="Brownstein M.J."/>
            <person name="Usdin T.B."/>
            <person name="Toshiyuki S."/>
            <person name="Carninci P."/>
            <person name="Prange C."/>
            <person name="Raha S.S."/>
            <person name="Loquellano N.A."/>
            <person name="Peters G.J."/>
            <person name="Abramson R.D."/>
            <person name="Mullahy S.J."/>
            <person name="Bosak S.A."/>
            <person name="McEwan P.J."/>
            <person name="McKernan K.J."/>
            <person name="Malek J.A."/>
            <person name="Gunaratne P.H."/>
            <person name="Richards S."/>
            <person name="Worley K.C."/>
            <person name="Hale S."/>
            <person name="Garcia A.M."/>
            <person name="Gay L.J."/>
            <person name="Hulyk S.W."/>
            <person name="Villalon D.K."/>
            <person name="Muzny D.M."/>
            <person name="Sodergren E.J."/>
            <person name="Lu X."/>
            <person name="Gibbs R.A."/>
            <person name="Fahey J."/>
            <person name="Helton E."/>
            <person name="Ketteman M."/>
            <person name="Madan A."/>
            <person name="Rodrigues S."/>
            <person name="Sanchez A."/>
            <person name="Whiting M."/>
            <person name="Madan A."/>
            <person name="Young A.C."/>
            <person name="Shevchenko Y."/>
            <person name="Bouffard G.G."/>
            <person name="Blakesley R.W."/>
            <person name="Touchman J.W."/>
            <person name="Green E.D."/>
            <person name="Dickson M.C."/>
            <person name="Rodriguez A.C."/>
            <person name="Grimwood J."/>
            <person name="Schmutz J."/>
            <person name="Myers R.M."/>
            <person name="Butterfield Y.S."/>
            <person name="Krzywinski M.I."/>
            <person name="Skalska U."/>
            <person name="Smailus D.E."/>
            <person name="Schnerch A."/>
            <person name="Schein J.E."/>
            <person name="Jones S.J."/>
            <person name="Marra M.A."/>
        </authorList>
    </citation>
    <scope>NUCLEOTIDE SEQUENCE [MRNA] (ISOFORM 1)</scope>
</reference>
<reference key="5">
    <citation type="journal article" date="2006" name="Arch. Biochem. Biophys.">
        <title>Heterologous expression, purification, and properties of human cytochrome P450 27C1.</title>
        <authorList>
            <person name="Wu Z.L."/>
            <person name="Bartleson C.J."/>
            <person name="Ham A.J."/>
            <person name="Guengerich F.P."/>
        </authorList>
    </citation>
    <scope>PARTIAL PROTEIN SEQUENCE (ISOFORM 2)</scope>
    <scope>IDENTIFICATION BY MASS SPECTROMETRY (ISOFORM 2)</scope>
    <scope>TISSUE SPECIFICITY</scope>
</reference>
<reference key="6">
    <citation type="journal article" date="2016" name="FEBS Lett.">
        <title>Human cytochrome P450 27C1 catalyzes 3,4-desaturation of retinoids.</title>
        <authorList>
            <person name="Kramlinger V.M."/>
            <person name="Nagy L.D."/>
            <person name="Fujiwara R."/>
            <person name="Johnson K.M."/>
            <person name="Phan T.T."/>
            <person name="Xiao Y."/>
            <person name="Enright J.M."/>
            <person name="Toomey M.B."/>
            <person name="Corbo J.C."/>
            <person name="Guengerich F.P."/>
        </authorList>
    </citation>
    <scope>FUNCTION (ISOFORM 2)</scope>
    <scope>CATALYTIC ACTIVITY (ISOFORM 2)</scope>
    <scope>BIOPHYSICOCHEMICAL PROPERTIES (ISOFORM 2)</scope>
    <scope>PATHWAY (ISOFORM 2)</scope>
</reference>
<reference key="7">
    <citation type="journal article" date="2017" name="J. Biol. Chem.">
        <title>Human mitochondrial cytochrome P450 27C1 is localized in skin and preferentially desaturates trans-retinol to 3,4-dehydroretinol.</title>
        <authorList>
            <person name="Johnson K.M."/>
            <person name="Phan T.T.N."/>
            <person name="Albertolle M.E."/>
            <person name="Guengerich F.P."/>
        </authorList>
    </citation>
    <scope>PROTEIN SEQUENCE OF 1-33; 79-89; 112-125; 157-170; 184-201; 208-225; 267-276; 292-307; 310-317; 369-378; 388-397; 411-420; 473-486 AND 524-542</scope>
    <scope>IDENTIFICATION BY MASS SPECTROMETRY (ISOFORM 2)</scope>
    <scope>FUNCTION (ISOFORM 2)</scope>
    <scope>CATALYTIC ACTIVITY (ISOFORM 2)</scope>
    <scope>TISSUE SPECIFICITY (ISOFORM 2)</scope>
    <scope>PATHWAY (ISOFORM 2)</scope>
</reference>
<evidence type="ECO:0000250" key="1">
    <source>
        <dbReference type="UniProtKB" id="P14137"/>
    </source>
</evidence>
<evidence type="ECO:0000250" key="2">
    <source>
        <dbReference type="UniProtKB" id="P19099"/>
    </source>
</evidence>
<evidence type="ECO:0000255" key="3"/>
<evidence type="ECO:0000256" key="4">
    <source>
        <dbReference type="SAM" id="MobiDB-lite"/>
    </source>
</evidence>
<evidence type="ECO:0000269" key="5">
    <source>
    </source>
</evidence>
<evidence type="ECO:0000269" key="6">
    <source>
    </source>
</evidence>
<evidence type="ECO:0000269" key="7">
    <source>
    </source>
</evidence>
<evidence type="ECO:0000303" key="8">
    <source>
    </source>
</evidence>
<evidence type="ECO:0000303" key="9">
    <source>
    </source>
</evidence>
<evidence type="ECO:0000305" key="10"/>
<evidence type="ECO:0000305" key="11">
    <source>
    </source>
</evidence>
<evidence type="ECO:0000305" key="12">
    <source>
    </source>
</evidence>
<evidence type="ECO:0000312" key="13">
    <source>
        <dbReference type="HGNC" id="HGNC:33480"/>
    </source>
</evidence>
<feature type="transit peptide" description="Mitochondrion" evidence="3">
    <location>
        <begin position="1"/>
        <end position="80"/>
    </location>
</feature>
<feature type="chain" id="PRO_0000293732" description="Cytochrome P450 27C1" evidence="3">
    <location>
        <begin position="81"/>
        <end position="542"/>
    </location>
</feature>
<feature type="region of interest" description="Disordered" evidence="4">
    <location>
        <begin position="20"/>
        <end position="75"/>
    </location>
</feature>
<feature type="compositionally biased region" description="Low complexity" evidence="4">
    <location>
        <begin position="32"/>
        <end position="46"/>
    </location>
</feature>
<feature type="binding site" description="axial binding residue" evidence="2">
    <location>
        <position position="488"/>
    </location>
    <ligand>
        <name>heme</name>
        <dbReference type="ChEBI" id="CHEBI:30413"/>
    </ligand>
    <ligandPart>
        <name>Fe</name>
        <dbReference type="ChEBI" id="CHEBI:18248"/>
    </ligandPart>
</feature>
<feature type="splice variant" id="VSP_060866" description="In isoform 1.">
    <location>
        <begin position="1"/>
        <end position="170"/>
    </location>
</feature>
<feature type="sequence variant" id="VAR_033120" description="In dbSNP:rs35075135.">
    <original>T</original>
    <variation>M</variation>
    <location>
        <position position="529"/>
    </location>
</feature>
<feature type="sequence conflict" description="In Ref. 3; AAH39307." evidence="10" ref="3">
    <original>L</original>
    <variation>I</variation>
    <location>
        <position position="365"/>
    </location>
</feature>
<dbReference type="EC" id="1.14.19.53" evidence="6 7"/>
<dbReference type="EMBL" id="AK131190">
    <property type="protein sequence ID" value="BAD18388.1"/>
    <property type="molecule type" value="mRNA"/>
</dbReference>
<dbReference type="EMBL" id="CH471103">
    <property type="protein sequence ID" value="EAW95310.1"/>
    <property type="status" value="ALT_INIT"/>
    <property type="molecule type" value="Genomic_DNA"/>
</dbReference>
<dbReference type="EMBL" id="AC110926">
    <property type="status" value="NOT_ANNOTATED_CDS"/>
    <property type="molecule type" value="Genomic_DNA"/>
</dbReference>
<dbReference type="EMBL" id="BC039307">
    <property type="protein sequence ID" value="AAH39307.1"/>
    <property type="molecule type" value="mRNA"/>
</dbReference>
<dbReference type="CCDS" id="CCDS33285.1">
    <molecule id="Q4G0S4-1"/>
</dbReference>
<dbReference type="RefSeq" id="NP_001001665.3">
    <molecule id="Q4G0S4-1"/>
    <property type="nucleotide sequence ID" value="NM_001001665.4"/>
</dbReference>
<dbReference type="RefSeq" id="NP_001354430.1">
    <molecule id="Q4G0S4-1"/>
    <property type="nucleotide sequence ID" value="NM_001367501.1"/>
</dbReference>
<dbReference type="SMR" id="Q4G0S4"/>
<dbReference type="BioGRID" id="130927">
    <property type="interactions" value="32"/>
</dbReference>
<dbReference type="FunCoup" id="Q4G0S4">
    <property type="interactions" value="719"/>
</dbReference>
<dbReference type="IntAct" id="Q4G0S4">
    <property type="interactions" value="3"/>
</dbReference>
<dbReference type="STRING" id="9606.ENSP00000334128"/>
<dbReference type="SwissLipids" id="SLP:000001617"/>
<dbReference type="iPTMnet" id="Q4G0S4"/>
<dbReference type="PhosphoSitePlus" id="Q4G0S4"/>
<dbReference type="BioMuta" id="CYP27C1"/>
<dbReference type="DMDM" id="296434415"/>
<dbReference type="jPOST" id="Q4G0S4"/>
<dbReference type="MassIVE" id="Q4G0S4"/>
<dbReference type="PaxDb" id="9606-ENSP00000334128"/>
<dbReference type="PeptideAtlas" id="Q4G0S4"/>
<dbReference type="ProteomicsDB" id="62124"/>
<dbReference type="Antibodypedia" id="47562">
    <property type="antibodies" value="84 antibodies from 18 providers"/>
</dbReference>
<dbReference type="DNASU" id="339761"/>
<dbReference type="Ensembl" id="ENST00000335247.11">
    <molecule id="Q4G0S4-1"/>
    <property type="protein sequence ID" value="ENSP00000334128.7"/>
    <property type="gene ID" value="ENSG00000186684.14"/>
</dbReference>
<dbReference type="Ensembl" id="ENST00000409327.2">
    <molecule id="Q4G0S4-1"/>
    <property type="protein sequence ID" value="ENSP00000387198.1"/>
    <property type="gene ID" value="ENSG00000186684.14"/>
</dbReference>
<dbReference type="GeneID" id="339761"/>
<dbReference type="KEGG" id="hsa:339761"/>
<dbReference type="UCSC" id="uc002tod.3">
    <molecule id="Q4G0S4-2"/>
    <property type="organism name" value="human"/>
</dbReference>
<dbReference type="AGR" id="HGNC:33480"/>
<dbReference type="CTD" id="339761"/>
<dbReference type="DisGeNET" id="339761"/>
<dbReference type="GeneCards" id="CYP27C1"/>
<dbReference type="HGNC" id="HGNC:33480">
    <property type="gene designation" value="CYP27C1"/>
</dbReference>
<dbReference type="HPA" id="ENSG00000186684">
    <property type="expression patterns" value="Tissue enhanced (cervix, skin)"/>
</dbReference>
<dbReference type="MIM" id="620605">
    <property type="type" value="gene"/>
</dbReference>
<dbReference type="neXtProt" id="NX_Q4G0S4"/>
<dbReference type="OpenTargets" id="ENSG00000186684"/>
<dbReference type="PharmGKB" id="PA162383091"/>
<dbReference type="VEuPathDB" id="HostDB:ENSG00000186684"/>
<dbReference type="eggNOG" id="KOG0159">
    <property type="taxonomic scope" value="Eukaryota"/>
</dbReference>
<dbReference type="GeneTree" id="ENSGT00950000182905"/>
<dbReference type="HOGENOM" id="CLU_001570_28_3_1"/>
<dbReference type="InParanoid" id="Q4G0S4"/>
<dbReference type="OMA" id="EIHLVMI"/>
<dbReference type="OrthoDB" id="3945418at2759"/>
<dbReference type="PAN-GO" id="Q4G0S4">
    <property type="GO annotations" value="6 GO annotations based on evolutionary models"/>
</dbReference>
<dbReference type="PhylomeDB" id="Q4G0S4"/>
<dbReference type="TreeFam" id="TF105094"/>
<dbReference type="BRENDA" id="1.14.19.53">
    <property type="organism ID" value="2681"/>
</dbReference>
<dbReference type="PathwayCommons" id="Q4G0S4"/>
<dbReference type="SignaLink" id="Q4G0S4"/>
<dbReference type="UniPathway" id="UPA00912"/>
<dbReference type="BioGRID-ORCS" id="339761">
    <property type="hits" value="7 hits in 1151 CRISPR screens"/>
</dbReference>
<dbReference type="ChiTaRS" id="CYP27C1">
    <property type="organism name" value="human"/>
</dbReference>
<dbReference type="GeneWiki" id="CYP27C1"/>
<dbReference type="GenomeRNAi" id="339761"/>
<dbReference type="Pharos" id="Q4G0S4">
    <property type="development level" value="Tbio"/>
</dbReference>
<dbReference type="PRO" id="PR:Q4G0S4"/>
<dbReference type="Proteomes" id="UP000005640">
    <property type="component" value="Chromosome 2"/>
</dbReference>
<dbReference type="RNAct" id="Q4G0S4">
    <property type="molecule type" value="protein"/>
</dbReference>
<dbReference type="Bgee" id="ENSG00000186684">
    <property type="expression patterns" value="Expressed in tendon of biceps brachii and 98 other cell types or tissues"/>
</dbReference>
<dbReference type="ExpressionAtlas" id="Q4G0S4">
    <property type="expression patterns" value="baseline and differential"/>
</dbReference>
<dbReference type="GO" id="GO:0043231">
    <property type="term" value="C:intracellular membrane-bounded organelle"/>
    <property type="evidence" value="ECO:0000314"/>
    <property type="project" value="HPA"/>
</dbReference>
<dbReference type="GO" id="GO:0031966">
    <property type="term" value="C:mitochondrial membrane"/>
    <property type="evidence" value="ECO:0007669"/>
    <property type="project" value="UniProtKB-SubCell"/>
</dbReference>
<dbReference type="GO" id="GO:0005739">
    <property type="term" value="C:mitochondrion"/>
    <property type="evidence" value="ECO:0006056"/>
    <property type="project" value="FlyBase"/>
</dbReference>
<dbReference type="GO" id="GO:0005502">
    <property type="term" value="F:11-cis retinal binding"/>
    <property type="evidence" value="ECO:0000314"/>
    <property type="project" value="UniProtKB"/>
</dbReference>
<dbReference type="GO" id="GO:0061899">
    <property type="term" value="F:11-cis-retinal 3,4-desaturase activity"/>
    <property type="evidence" value="ECO:0000314"/>
    <property type="project" value="UniProtKB"/>
</dbReference>
<dbReference type="GO" id="GO:0061897">
    <property type="term" value="F:all-trans retinal 3,4-desaturase activity"/>
    <property type="evidence" value="ECO:0000314"/>
    <property type="project" value="UniProtKB"/>
</dbReference>
<dbReference type="GO" id="GO:0005503">
    <property type="term" value="F:all-trans retinal binding"/>
    <property type="evidence" value="ECO:0000314"/>
    <property type="project" value="UniProtKB"/>
</dbReference>
<dbReference type="GO" id="GO:0061898">
    <property type="term" value="F:all-trans retinoic acid 3,4-desaturase activity"/>
    <property type="evidence" value="ECO:0000314"/>
    <property type="project" value="UniProtKB"/>
</dbReference>
<dbReference type="GO" id="GO:0061896">
    <property type="term" value="F:all-trans retinol 3,4-desaturase activity"/>
    <property type="evidence" value="ECO:0000314"/>
    <property type="project" value="UniProtKB"/>
</dbReference>
<dbReference type="GO" id="GO:1904768">
    <property type="term" value="F:all-trans-retinol binding"/>
    <property type="evidence" value="ECO:0000314"/>
    <property type="project" value="UniProtKB"/>
</dbReference>
<dbReference type="GO" id="GO:0020037">
    <property type="term" value="F:heme binding"/>
    <property type="evidence" value="ECO:0007669"/>
    <property type="project" value="InterPro"/>
</dbReference>
<dbReference type="GO" id="GO:0005506">
    <property type="term" value="F:iron ion binding"/>
    <property type="evidence" value="ECO:0007669"/>
    <property type="project" value="InterPro"/>
</dbReference>
<dbReference type="GO" id="GO:0004497">
    <property type="term" value="F:monooxygenase activity"/>
    <property type="evidence" value="ECO:0007669"/>
    <property type="project" value="UniProtKB-KW"/>
</dbReference>
<dbReference type="GO" id="GO:0001972">
    <property type="term" value="F:retinoic acid binding"/>
    <property type="evidence" value="ECO:0000314"/>
    <property type="project" value="UniProtKB"/>
</dbReference>
<dbReference type="GO" id="GO:0042574">
    <property type="term" value="P:retinal metabolic process"/>
    <property type="evidence" value="ECO:0000314"/>
    <property type="project" value="UniProtKB"/>
</dbReference>
<dbReference type="GO" id="GO:0042573">
    <property type="term" value="P:retinoic acid metabolic process"/>
    <property type="evidence" value="ECO:0000314"/>
    <property type="project" value="UniProtKB"/>
</dbReference>
<dbReference type="GO" id="GO:0042572">
    <property type="term" value="P:retinol metabolic process"/>
    <property type="evidence" value="ECO:0000314"/>
    <property type="project" value="UniProtKB"/>
</dbReference>
<dbReference type="CDD" id="cd20647">
    <property type="entry name" value="CYP27C1"/>
    <property type="match status" value="1"/>
</dbReference>
<dbReference type="FunFam" id="1.10.630.10:FF:000073">
    <property type="entry name" value="Cytochrome P450 family 27 subfamily C member 1"/>
    <property type="match status" value="1"/>
</dbReference>
<dbReference type="Gene3D" id="1.10.630.10">
    <property type="entry name" value="Cytochrome P450"/>
    <property type="match status" value="1"/>
</dbReference>
<dbReference type="InterPro" id="IPR050479">
    <property type="entry name" value="CYP11_CYP27_families"/>
</dbReference>
<dbReference type="InterPro" id="IPR001128">
    <property type="entry name" value="Cyt_P450"/>
</dbReference>
<dbReference type="InterPro" id="IPR017972">
    <property type="entry name" value="Cyt_P450_CS"/>
</dbReference>
<dbReference type="InterPro" id="IPR002401">
    <property type="entry name" value="Cyt_P450_E_grp-I"/>
</dbReference>
<dbReference type="InterPro" id="IPR036396">
    <property type="entry name" value="Cyt_P450_sf"/>
</dbReference>
<dbReference type="PANTHER" id="PTHR24279">
    <property type="entry name" value="CYTOCHROME P450"/>
    <property type="match status" value="1"/>
</dbReference>
<dbReference type="PANTHER" id="PTHR24279:SF122">
    <property type="entry name" value="CYTOCHROME P450 FAMILY 27 SUBFAMILY C MEMBER 1"/>
    <property type="match status" value="1"/>
</dbReference>
<dbReference type="Pfam" id="PF00067">
    <property type="entry name" value="p450"/>
    <property type="match status" value="1"/>
</dbReference>
<dbReference type="PRINTS" id="PR00463">
    <property type="entry name" value="EP450I"/>
</dbReference>
<dbReference type="PRINTS" id="PR00385">
    <property type="entry name" value="P450"/>
</dbReference>
<dbReference type="SUPFAM" id="SSF48264">
    <property type="entry name" value="Cytochrome P450"/>
    <property type="match status" value="1"/>
</dbReference>
<dbReference type="PROSITE" id="PS00086">
    <property type="entry name" value="CYTOCHROME_P450"/>
    <property type="match status" value="1"/>
</dbReference>
<keyword id="KW-0877">Alternative promoter usage</keyword>
<keyword id="KW-0903">Direct protein sequencing</keyword>
<keyword id="KW-0349">Heme</keyword>
<keyword id="KW-0408">Iron</keyword>
<keyword id="KW-0443">Lipid metabolism</keyword>
<keyword id="KW-0472">Membrane</keyword>
<keyword id="KW-0479">Metal-binding</keyword>
<keyword id="KW-0496">Mitochondrion</keyword>
<keyword id="KW-0503">Monooxygenase</keyword>
<keyword id="KW-0560">Oxidoreductase</keyword>
<keyword id="KW-1267">Proteomics identification</keyword>
<keyword id="KW-1185">Reference proteome</keyword>
<keyword id="KW-0809">Transit peptide</keyword>
<sequence>MQTSAMALLARILRAGLRPAPERGGLLGGGAPRRPQPAGARLPAGARAEDKGAGRPGSPPGGGRAEGPRSLAAMPGPRTLANLAEFFCRDGFSRIHEIQQKHTREYGKIFKSHFGPQFVVSIADRDMVAQVLRAEGAAPQRANMESWREYRDLRGRATGLISAEGEQWLKMRSVLRQRILKPKDVAIYSGEVNQVIADLIKRIYLLRSQAEDGETVTNVNDLFFKYSMEGVATILYESRLGCLENSIPQLTVEYIEALELMFSMFKTSMYAGAIPRWLRPFIPKPWREFCRSWDGLFKFSQIHVDNKLRDIQYQMDRGRRVSGGLLTYLFLSQALTLQEIYANVTEMLLAGVDTTSFTLSWTVYLLARHPEVQQTVYREIVKNLGERHVPTAADVPKVPLVRALLKETLRLFPVLPGNGRVTQEDLVIGGYLIPKGTQLALCHYATSYQDENFPRAKEFRPERWLRKGDLDRVDNFGSIPFGHGVRSCIGRRIAELEIHLVVIQLLQHFEIKTSSQTNAVHAKTHGLLTPGGPIHVRFVNRK</sequence>
<proteinExistence type="evidence at protein level"/>
<name>C27C1_HUMAN</name>
<comment type="function">
    <molecule>Isoform 2</molecule>
    <text evidence="6 7">A cytochrome P450 monooxygenase that catalyzes the 3,4 desaturation of all-trans-retinol (also called vitamin A1) to all-trans-3,4-didehydroretinol (also called vitamin A2) in the skin. Desaturates with lower efficiency all-trans retinal and all-trans retinoic acid. Forms minor amounts of 3-hydroxy and 4-hydroxy all-trans-retinol derivatives. Mechanistically, uses molecular oxygen inserting one oxygen atom into a substrate and reducing the second into a water molecule. Two electrons are provided by NADPH via a two-protein mitochondrial transfer system comprising flavoprotein FDXR (adrenodoxin/ferredoxin reductase) and nonheme iron-sulfur protein FDX1 or FDX2 (adrenodoxin/ferredoxin).</text>
</comment>
<comment type="catalytic activity">
    <molecule>Isoform 2</molecule>
    <reaction evidence="6 7">
        <text>all-trans-retinol + 2 reduced [adrenodoxin] + O2 + 2 H(+) = all-trans-3,4-didehydroretinol + 2 oxidized [adrenodoxin] + 2 H2O</text>
        <dbReference type="Rhea" id="RHEA:50292"/>
        <dbReference type="Rhea" id="RHEA-COMP:9998"/>
        <dbReference type="Rhea" id="RHEA-COMP:9999"/>
        <dbReference type="ChEBI" id="CHEBI:15377"/>
        <dbReference type="ChEBI" id="CHEBI:15378"/>
        <dbReference type="ChEBI" id="CHEBI:15379"/>
        <dbReference type="ChEBI" id="CHEBI:17336"/>
        <dbReference type="ChEBI" id="CHEBI:33737"/>
        <dbReference type="ChEBI" id="CHEBI:33738"/>
        <dbReference type="ChEBI" id="CHEBI:132246"/>
        <dbReference type="EC" id="1.14.19.53"/>
    </reaction>
    <physiologicalReaction direction="left-to-right" evidence="11 12">
        <dbReference type="Rhea" id="RHEA:50293"/>
    </physiologicalReaction>
</comment>
<comment type="catalytic activity">
    <molecule>Isoform 2</molecule>
    <reaction evidence="6 7">
        <text>all-trans-retinol + 2 reduced [adrenodoxin] + O2 + 2 H(+) = all-trans-4-hydroxyretinol + 2 oxidized [adrenodoxin] + H2O</text>
        <dbReference type="Rhea" id="RHEA:50300"/>
        <dbReference type="Rhea" id="RHEA-COMP:9998"/>
        <dbReference type="Rhea" id="RHEA-COMP:9999"/>
        <dbReference type="ChEBI" id="CHEBI:15377"/>
        <dbReference type="ChEBI" id="CHEBI:15378"/>
        <dbReference type="ChEBI" id="CHEBI:15379"/>
        <dbReference type="ChEBI" id="CHEBI:17336"/>
        <dbReference type="ChEBI" id="CHEBI:33737"/>
        <dbReference type="ChEBI" id="CHEBI:33738"/>
        <dbReference type="ChEBI" id="CHEBI:132259"/>
    </reaction>
    <physiologicalReaction direction="left-to-right" evidence="11 12">
        <dbReference type="Rhea" id="RHEA:50301"/>
    </physiologicalReaction>
</comment>
<comment type="catalytic activity">
    <molecule>Isoform 2</molecule>
    <reaction evidence="7">
        <text>all-trans-retinol + 2 reduced [adrenodoxin] + O2 + 2 H(+) = all-trans-3-hydroxyretinol + 2 oxidized [adrenodoxin] + H2O</text>
        <dbReference type="Rhea" id="RHEA:65520"/>
        <dbReference type="Rhea" id="RHEA-COMP:9998"/>
        <dbReference type="Rhea" id="RHEA-COMP:9999"/>
        <dbReference type="ChEBI" id="CHEBI:15377"/>
        <dbReference type="ChEBI" id="CHEBI:15378"/>
        <dbReference type="ChEBI" id="CHEBI:15379"/>
        <dbReference type="ChEBI" id="CHEBI:17336"/>
        <dbReference type="ChEBI" id="CHEBI:33737"/>
        <dbReference type="ChEBI" id="CHEBI:33738"/>
        <dbReference type="ChEBI" id="CHEBI:156530"/>
    </reaction>
    <physiologicalReaction direction="left-to-right" evidence="12">
        <dbReference type="Rhea" id="RHEA:65521"/>
    </physiologicalReaction>
</comment>
<comment type="cofactor">
    <cofactor evidence="2">
        <name>heme</name>
        <dbReference type="ChEBI" id="CHEBI:30413"/>
    </cofactor>
</comment>
<comment type="biophysicochemical properties">
    <molecule>Isoform 2</molecule>
    <kinetics>
        <KM evidence="6">0.5 uM for all-trans retinol</KM>
        <KM evidence="6">0.35 uM for all-trans retinal</KM>
        <KM evidence="6">0.87 uM for all-trans retinoic acid</KM>
    </kinetics>
</comment>
<comment type="pathway">
    <molecule>Isoform 2</molecule>
    <text evidence="6 7">Cofactor metabolism; retinol metabolism.</text>
</comment>
<comment type="subcellular location">
    <molecule>Isoform 2</molecule>
    <subcellularLocation>
        <location evidence="1">Mitochondrion membrane</location>
        <topology evidence="1">Peripheral membrane protein</topology>
    </subcellularLocation>
</comment>
<comment type="alternative products">
    <event type="alternative promoter"/>
    <isoform>
        <id>Q4G0S4-2</id>
        <name>2</name>
        <sequence type="displayed"/>
    </isoform>
    <isoform>
        <id>Q4G0S4-1</id>
        <name>1</name>
        <sequence type="described" ref="VSP_060866"/>
    </isoform>
</comment>
<comment type="tissue specificity">
    <text evidence="5">Widely expressed, with highest levels in the liver, kidney and pancreas.</text>
</comment>
<comment type="tissue specificity">
    <molecule>Isoform 2</molecule>
    <text evidence="7">Expressed in the skin (at protein level).</text>
</comment>
<comment type="similarity">
    <text evidence="10">Belongs to the cytochrome P450 family.</text>
</comment>
<comment type="sequence caution" evidence="10">
    <conflict type="erroneous initiation">
        <sequence resource="EMBL-CDS" id="EAW95310"/>
    </conflict>
    <text>Extended N-terminus.</text>
</comment>
<comment type="online information" name="Protein Spotlight">
    <link uri="https://www.proteinspotlight.org/back_issues/192/"/>
    <text>Seeing through the murk - Issue 192 of June 2017</text>
</comment>
<gene>
    <name evidence="13" type="primary">CYP27C1</name>
</gene>
<accession>Q4G0S4</accession>
<accession>A0A590UJ17</accession>
<accession>Q6ZNI7</accession>
<protein>
    <recommendedName>
        <fullName evidence="9">Cytochrome P450 27C1</fullName>
        <ecNumber evidence="6 7">1.14.19.53</ecNumber>
    </recommendedName>
    <alternativeName>
        <fullName evidence="8">All-trans retinol 3,4-desaturase</fullName>
    </alternativeName>
</protein>
<organism>
    <name type="scientific">Homo sapiens</name>
    <name type="common">Human</name>
    <dbReference type="NCBI Taxonomy" id="9606"/>
    <lineage>
        <taxon>Eukaryota</taxon>
        <taxon>Metazoa</taxon>
        <taxon>Chordata</taxon>
        <taxon>Craniata</taxon>
        <taxon>Vertebrata</taxon>
        <taxon>Euteleostomi</taxon>
        <taxon>Mammalia</taxon>
        <taxon>Eutheria</taxon>
        <taxon>Euarchontoglires</taxon>
        <taxon>Primates</taxon>
        <taxon>Haplorrhini</taxon>
        <taxon>Catarrhini</taxon>
        <taxon>Hominidae</taxon>
        <taxon>Homo</taxon>
    </lineage>
</organism>